<gene>
    <name type="primary">slrR</name>
    <name type="synonym">slr</name>
    <name type="synonym">yveJ</name>
    <name type="ordered locus">BSU34380</name>
</gene>
<comment type="function">
    <text evidence="3 4">Represses sigma(D)-dependent flagellar genes and activate the eps and yqxM operons. Repressor activity is regulated by SlrA. Controls the initiation of biofilm formation.</text>
</comment>
<comment type="subunit">
    <text>Component of the SlrR/SlrA complex.</text>
</comment>
<sequence length="152" mass="17570">MIGRIIRLYRKRKGYSINQLAVESGVSKSYLSKIERGVHTNPSVQFLKKVSATLEVELTELFDAETMMYEKISGGEEEWRVHLVQAVQAGMEKEELFTFTNRLKKEQPETASYRNRKLTESNIEEWKALMAEAREIGLSVHEVKSFLKTKGR</sequence>
<feature type="chain" id="PRO_0000360160" description="HTH-type transcriptional regulator SlrR">
    <location>
        <begin position="1"/>
        <end position="152"/>
    </location>
</feature>
<feature type="domain" description="HTH cro/C1-type" evidence="1">
    <location>
        <begin position="6"/>
        <end position="61"/>
    </location>
</feature>
<feature type="domain" description="Sin" evidence="2">
    <location>
        <begin position="113"/>
        <end position="151"/>
    </location>
</feature>
<feature type="DNA-binding region" description="H-T-H motif" evidence="1">
    <location>
        <begin position="17"/>
        <end position="36"/>
    </location>
</feature>
<keyword id="KW-0238">DNA-binding</keyword>
<keyword id="KW-1185">Reference proteome</keyword>
<keyword id="KW-0804">Transcription</keyword>
<keyword id="KW-0805">Transcription regulation</keyword>
<organism>
    <name type="scientific">Bacillus subtilis (strain 168)</name>
    <dbReference type="NCBI Taxonomy" id="224308"/>
    <lineage>
        <taxon>Bacteria</taxon>
        <taxon>Bacillati</taxon>
        <taxon>Bacillota</taxon>
        <taxon>Bacilli</taxon>
        <taxon>Bacillales</taxon>
        <taxon>Bacillaceae</taxon>
        <taxon>Bacillus</taxon>
    </lineage>
</organism>
<accession>P71049</accession>
<accession>O07961</accession>
<accession>O08168</accession>
<accession>Q795I0</accession>
<proteinExistence type="predicted"/>
<evidence type="ECO:0000255" key="1">
    <source>
        <dbReference type="PROSITE-ProRule" id="PRU00257"/>
    </source>
</evidence>
<evidence type="ECO:0000255" key="2">
    <source>
        <dbReference type="PROSITE-ProRule" id="PRU00833"/>
    </source>
</evidence>
<evidence type="ECO:0000269" key="3">
    <source>
    </source>
</evidence>
<evidence type="ECO:0000269" key="4">
    <source>
    </source>
</evidence>
<dbReference type="EMBL" id="Z71928">
    <property type="protein sequence ID" value="CAA96488.1"/>
    <property type="molecule type" value="Genomic_DNA"/>
</dbReference>
<dbReference type="EMBL" id="U46134">
    <property type="protein sequence ID" value="AAB39888.1"/>
    <property type="molecule type" value="Genomic_DNA"/>
</dbReference>
<dbReference type="EMBL" id="Z94043">
    <property type="protein sequence ID" value="CAB08022.1"/>
    <property type="molecule type" value="Genomic_DNA"/>
</dbReference>
<dbReference type="EMBL" id="AL009126">
    <property type="protein sequence ID" value="CAB15443.1"/>
    <property type="molecule type" value="Genomic_DNA"/>
</dbReference>
<dbReference type="PIR" id="E69708">
    <property type="entry name" value="E69708"/>
</dbReference>
<dbReference type="RefSeq" id="NP_391318.1">
    <property type="nucleotide sequence ID" value="NC_000964.3"/>
</dbReference>
<dbReference type="RefSeq" id="WP_003242589.1">
    <property type="nucleotide sequence ID" value="NZ_OZ025638.1"/>
</dbReference>
<dbReference type="SMR" id="P71049"/>
<dbReference type="FunCoup" id="P71049">
    <property type="interactions" value="148"/>
</dbReference>
<dbReference type="STRING" id="224308.BSU34380"/>
<dbReference type="PaxDb" id="224308-BSU34380"/>
<dbReference type="EnsemblBacteria" id="CAB15443">
    <property type="protein sequence ID" value="CAB15443"/>
    <property type="gene ID" value="BSU_34380"/>
</dbReference>
<dbReference type="GeneID" id="938581"/>
<dbReference type="KEGG" id="bsu:BSU34380"/>
<dbReference type="PATRIC" id="fig|224308.179.peg.3724"/>
<dbReference type="eggNOG" id="COG1396">
    <property type="taxonomic scope" value="Bacteria"/>
</dbReference>
<dbReference type="InParanoid" id="P71049"/>
<dbReference type="OrthoDB" id="1859224at2"/>
<dbReference type="PhylomeDB" id="P71049"/>
<dbReference type="BioCyc" id="BSUB:BSU34380-MONOMER"/>
<dbReference type="Proteomes" id="UP000001570">
    <property type="component" value="Chromosome"/>
</dbReference>
<dbReference type="GO" id="GO:0003677">
    <property type="term" value="F:DNA binding"/>
    <property type="evidence" value="ECO:0007669"/>
    <property type="project" value="UniProtKB-KW"/>
</dbReference>
<dbReference type="GO" id="GO:0003700">
    <property type="term" value="F:DNA-binding transcription factor activity"/>
    <property type="evidence" value="ECO:0000318"/>
    <property type="project" value="GO_Central"/>
</dbReference>
<dbReference type="GO" id="GO:0046983">
    <property type="term" value="F:protein dimerization activity"/>
    <property type="evidence" value="ECO:0007669"/>
    <property type="project" value="InterPro"/>
</dbReference>
<dbReference type="GO" id="GO:0006355">
    <property type="term" value="P:regulation of DNA-templated transcription"/>
    <property type="evidence" value="ECO:0000318"/>
    <property type="project" value="GO_Central"/>
</dbReference>
<dbReference type="CDD" id="cd00093">
    <property type="entry name" value="HTH_XRE"/>
    <property type="match status" value="1"/>
</dbReference>
<dbReference type="Gene3D" id="1.10.260.40">
    <property type="entry name" value="lambda repressor-like DNA-binding domains"/>
    <property type="match status" value="1"/>
</dbReference>
<dbReference type="InterPro" id="IPR050807">
    <property type="entry name" value="Bact_TransReg_Diox"/>
</dbReference>
<dbReference type="InterPro" id="IPR001387">
    <property type="entry name" value="Cro/C1-type_HTH"/>
</dbReference>
<dbReference type="InterPro" id="IPR010982">
    <property type="entry name" value="Lambda_DNA-bd_dom_sf"/>
</dbReference>
<dbReference type="InterPro" id="IPR010981">
    <property type="entry name" value="SinR/SinI_dimer_dom"/>
</dbReference>
<dbReference type="InterPro" id="IPR036281">
    <property type="entry name" value="SinR/SinI_dimer_dom_sf"/>
</dbReference>
<dbReference type="NCBIfam" id="NF046032">
    <property type="entry name" value="TransRegSlrRBacil"/>
    <property type="match status" value="1"/>
</dbReference>
<dbReference type="PANTHER" id="PTHR46797">
    <property type="entry name" value="HTH-TYPE TRANSCRIPTIONAL REGULATOR"/>
    <property type="match status" value="1"/>
</dbReference>
<dbReference type="PANTHER" id="PTHR46797:SF1">
    <property type="entry name" value="METHYLPHOSPHONATE SYNTHASE"/>
    <property type="match status" value="1"/>
</dbReference>
<dbReference type="Pfam" id="PF01381">
    <property type="entry name" value="HTH_3"/>
    <property type="match status" value="1"/>
</dbReference>
<dbReference type="Pfam" id="PF08671">
    <property type="entry name" value="SinI"/>
    <property type="match status" value="1"/>
</dbReference>
<dbReference type="SMART" id="SM00530">
    <property type="entry name" value="HTH_XRE"/>
    <property type="match status" value="1"/>
</dbReference>
<dbReference type="SUPFAM" id="SSF47413">
    <property type="entry name" value="lambda repressor-like DNA-binding domains"/>
    <property type="match status" value="1"/>
</dbReference>
<dbReference type="SUPFAM" id="SSF47406">
    <property type="entry name" value="SinR repressor dimerisation domain-like"/>
    <property type="match status" value="1"/>
</dbReference>
<dbReference type="PROSITE" id="PS50943">
    <property type="entry name" value="HTH_CROC1"/>
    <property type="match status" value="1"/>
</dbReference>
<dbReference type="PROSITE" id="PS51500">
    <property type="entry name" value="SIN"/>
    <property type="match status" value="1"/>
</dbReference>
<protein>
    <recommendedName>
        <fullName>HTH-type transcriptional regulator SlrR</fullName>
    </recommendedName>
</protein>
<reference key="1">
    <citation type="journal article" date="1996" name="Microbiology">
        <title>Integrated mapping and sequencing of a 115 kb DNA fragment from Bacillus subtilis: sequence analysis of a 21 kb segment containing the sigL locus.</title>
        <authorList>
            <person name="Fabret C."/>
            <person name="Quentin Y."/>
            <person name="Chapal N."/>
            <person name="Guiseppi A."/>
            <person name="Haiech J."/>
            <person name="Denizot F."/>
        </authorList>
    </citation>
    <scope>NUCLEOTIDE SEQUENCE [GENOMIC DNA]</scope>
    <source>
        <strain>168</strain>
    </source>
</reference>
<reference key="2">
    <citation type="submission" date="1996-01" db="EMBL/GenBank/DDBJ databases">
        <title>Identification of a SinR-homolog involved in initiation of competence development and sporulation in Bacillus subtilis.</title>
        <authorList>
            <person name="Dartois V.A."/>
            <person name="Ferrari E."/>
            <person name="Hoch J.A."/>
        </authorList>
    </citation>
    <scope>NUCLEOTIDE SEQUENCE [GENOMIC DNA]</scope>
    <source>
        <strain>168</strain>
    </source>
</reference>
<reference key="3">
    <citation type="submission" date="1997-04" db="EMBL/GenBank/DDBJ databases">
        <authorList>
            <person name="Denizot F."/>
        </authorList>
    </citation>
    <scope>NUCLEOTIDE SEQUENCE [GENOMIC DNA]</scope>
    <source>
        <strain>168</strain>
    </source>
</reference>
<reference key="4">
    <citation type="journal article" date="1997" name="Nature">
        <title>The complete genome sequence of the Gram-positive bacterium Bacillus subtilis.</title>
        <authorList>
            <person name="Kunst F."/>
            <person name="Ogasawara N."/>
            <person name="Moszer I."/>
            <person name="Albertini A.M."/>
            <person name="Alloni G."/>
            <person name="Azevedo V."/>
            <person name="Bertero M.G."/>
            <person name="Bessieres P."/>
            <person name="Bolotin A."/>
            <person name="Borchert S."/>
            <person name="Borriss R."/>
            <person name="Boursier L."/>
            <person name="Brans A."/>
            <person name="Braun M."/>
            <person name="Brignell S.C."/>
            <person name="Bron S."/>
            <person name="Brouillet S."/>
            <person name="Bruschi C.V."/>
            <person name="Caldwell B."/>
            <person name="Capuano V."/>
            <person name="Carter N.M."/>
            <person name="Choi S.-K."/>
            <person name="Codani J.-J."/>
            <person name="Connerton I.F."/>
            <person name="Cummings N.J."/>
            <person name="Daniel R.A."/>
            <person name="Denizot F."/>
            <person name="Devine K.M."/>
            <person name="Duesterhoeft A."/>
            <person name="Ehrlich S.D."/>
            <person name="Emmerson P.T."/>
            <person name="Entian K.-D."/>
            <person name="Errington J."/>
            <person name="Fabret C."/>
            <person name="Ferrari E."/>
            <person name="Foulger D."/>
            <person name="Fritz C."/>
            <person name="Fujita M."/>
            <person name="Fujita Y."/>
            <person name="Fuma S."/>
            <person name="Galizzi A."/>
            <person name="Galleron N."/>
            <person name="Ghim S.-Y."/>
            <person name="Glaser P."/>
            <person name="Goffeau A."/>
            <person name="Golightly E.J."/>
            <person name="Grandi G."/>
            <person name="Guiseppi G."/>
            <person name="Guy B.J."/>
            <person name="Haga K."/>
            <person name="Haiech J."/>
            <person name="Harwood C.R."/>
            <person name="Henaut A."/>
            <person name="Hilbert H."/>
            <person name="Holsappel S."/>
            <person name="Hosono S."/>
            <person name="Hullo M.-F."/>
            <person name="Itaya M."/>
            <person name="Jones L.-M."/>
            <person name="Joris B."/>
            <person name="Karamata D."/>
            <person name="Kasahara Y."/>
            <person name="Klaerr-Blanchard M."/>
            <person name="Klein C."/>
            <person name="Kobayashi Y."/>
            <person name="Koetter P."/>
            <person name="Koningstein G."/>
            <person name="Krogh S."/>
            <person name="Kumano M."/>
            <person name="Kurita K."/>
            <person name="Lapidus A."/>
            <person name="Lardinois S."/>
            <person name="Lauber J."/>
            <person name="Lazarevic V."/>
            <person name="Lee S.-M."/>
            <person name="Levine A."/>
            <person name="Liu H."/>
            <person name="Masuda S."/>
            <person name="Mauel C."/>
            <person name="Medigue C."/>
            <person name="Medina N."/>
            <person name="Mellado R.P."/>
            <person name="Mizuno M."/>
            <person name="Moestl D."/>
            <person name="Nakai S."/>
            <person name="Noback M."/>
            <person name="Noone D."/>
            <person name="O'Reilly M."/>
            <person name="Ogawa K."/>
            <person name="Ogiwara A."/>
            <person name="Oudega B."/>
            <person name="Park S.-H."/>
            <person name="Parro V."/>
            <person name="Pohl T.M."/>
            <person name="Portetelle D."/>
            <person name="Porwollik S."/>
            <person name="Prescott A.M."/>
            <person name="Presecan E."/>
            <person name="Pujic P."/>
            <person name="Purnelle B."/>
            <person name="Rapoport G."/>
            <person name="Rey M."/>
            <person name="Reynolds S."/>
            <person name="Rieger M."/>
            <person name="Rivolta C."/>
            <person name="Rocha E."/>
            <person name="Roche B."/>
            <person name="Rose M."/>
            <person name="Sadaie Y."/>
            <person name="Sato T."/>
            <person name="Scanlan E."/>
            <person name="Schleich S."/>
            <person name="Schroeter R."/>
            <person name="Scoffone F."/>
            <person name="Sekiguchi J."/>
            <person name="Sekowska A."/>
            <person name="Seror S.J."/>
            <person name="Serror P."/>
            <person name="Shin B.-S."/>
            <person name="Soldo B."/>
            <person name="Sorokin A."/>
            <person name="Tacconi E."/>
            <person name="Takagi T."/>
            <person name="Takahashi H."/>
            <person name="Takemaru K."/>
            <person name="Takeuchi M."/>
            <person name="Tamakoshi A."/>
            <person name="Tanaka T."/>
            <person name="Terpstra P."/>
            <person name="Tognoni A."/>
            <person name="Tosato V."/>
            <person name="Uchiyama S."/>
            <person name="Vandenbol M."/>
            <person name="Vannier F."/>
            <person name="Vassarotti A."/>
            <person name="Viari A."/>
            <person name="Wambutt R."/>
            <person name="Wedler E."/>
            <person name="Wedler H."/>
            <person name="Weitzenegger T."/>
            <person name="Winters P."/>
            <person name="Wipat A."/>
            <person name="Yamamoto H."/>
            <person name="Yamane K."/>
            <person name="Yasumoto K."/>
            <person name="Yata K."/>
            <person name="Yoshida K."/>
            <person name="Yoshikawa H.-F."/>
            <person name="Zumstein E."/>
            <person name="Yoshikawa H."/>
            <person name="Danchin A."/>
        </authorList>
    </citation>
    <scope>NUCLEOTIDE SEQUENCE [LARGE SCALE GENOMIC DNA]</scope>
    <source>
        <strain>168</strain>
    </source>
</reference>
<reference key="5">
    <citation type="journal article" date="2008" name="Mol. Microbiol.">
        <title>A novel regulatory protein governing biofilm formation in Bacillus subtilis.</title>
        <authorList>
            <person name="Chu F."/>
            <person name="Kearns D.B."/>
            <person name="McLoon A."/>
            <person name="Chai Y."/>
            <person name="Kolter R."/>
            <person name="Losick R."/>
        </authorList>
    </citation>
    <scope>FUNCTION</scope>
</reference>
<reference key="6">
    <citation type="journal article" date="2008" name="Mol. Microbiol.">
        <title>SlrR/SlrA controls the initiation of biofilm formation in Bacillus subtilis.</title>
        <authorList>
            <person name="Kobayashi K."/>
        </authorList>
    </citation>
    <scope>FUNCTION</scope>
</reference>
<name>SLRR_BACSU</name>